<keyword id="KW-0002">3D-structure</keyword>
<keyword id="KW-0025">Alternative splicing</keyword>
<keyword id="KW-1003">Cell membrane</keyword>
<keyword id="KW-0868">Chloride</keyword>
<keyword id="KW-0903">Direct protein sequencing</keyword>
<keyword id="KW-0225">Disease variant</keyword>
<keyword id="KW-1015">Disulfide bond</keyword>
<keyword id="KW-0325">Glycoprotein</keyword>
<keyword id="KW-0472">Membrane</keyword>
<keyword id="KW-1267">Proteomics identification</keyword>
<keyword id="KW-0675">Receptor</keyword>
<keyword id="KW-1185">Reference proteome</keyword>
<keyword id="KW-0732">Signal</keyword>
<keyword id="KW-0812">Transmembrane</keyword>
<keyword id="KW-1133">Transmembrane helix</keyword>
<dbReference type="EMBL" id="X52282">
    <property type="protein sequence ID" value="CAA36523.1"/>
    <property type="molecule type" value="mRNA"/>
</dbReference>
<dbReference type="EMBL" id="M59305">
    <property type="protein sequence ID" value="AAA51734.1"/>
    <property type="molecule type" value="mRNA"/>
</dbReference>
<dbReference type="EMBL" id="AF025998">
    <property type="protein sequence ID" value="AAB88801.1"/>
    <property type="molecule type" value="mRNA"/>
</dbReference>
<dbReference type="EMBL" id="AK300094">
    <property type="protein sequence ID" value="BAG61896.1"/>
    <property type="molecule type" value="mRNA"/>
</dbReference>
<dbReference type="EMBL" id="AC008766">
    <property type="status" value="NOT_ANNOTATED_CDS"/>
    <property type="molecule type" value="Genomic_DNA"/>
</dbReference>
<dbReference type="EMBL" id="AC026703">
    <property type="status" value="NOT_ANNOTATED_CDS"/>
    <property type="molecule type" value="Genomic_DNA"/>
</dbReference>
<dbReference type="EMBL" id="CH471118">
    <property type="protein sequence ID" value="EAX10799.1"/>
    <property type="molecule type" value="Genomic_DNA"/>
</dbReference>
<dbReference type="EMBL" id="BC131540">
    <property type="protein sequence ID" value="AAI31541.1"/>
    <property type="molecule type" value="mRNA"/>
</dbReference>
<dbReference type="CCDS" id="CCDS47196.1">
    <molecule id="P17342-2"/>
</dbReference>
<dbReference type="CCDS" id="CCDS56356.1">
    <molecule id="P17342-3"/>
</dbReference>
<dbReference type="CCDS" id="CCDS56357.1">
    <molecule id="P17342-1"/>
</dbReference>
<dbReference type="PIR" id="S10150">
    <property type="entry name" value="OYHUCR"/>
</dbReference>
<dbReference type="RefSeq" id="NP_000899.1">
    <molecule id="P17342-2"/>
    <property type="nucleotide sequence ID" value="NM_000908.4"/>
</dbReference>
<dbReference type="RefSeq" id="NP_001191304.1">
    <molecule id="P17342-1"/>
    <property type="nucleotide sequence ID" value="NM_001204375.2"/>
</dbReference>
<dbReference type="RefSeq" id="NP_001191305.1">
    <molecule id="P17342-3"/>
    <property type="nucleotide sequence ID" value="NM_001204376.2"/>
</dbReference>
<dbReference type="PDB" id="1JDN">
    <property type="method" value="X-ray"/>
    <property type="resolution" value="2.90 A"/>
    <property type="chains" value="A=44-485"/>
</dbReference>
<dbReference type="PDB" id="1JDP">
    <property type="method" value="X-ray"/>
    <property type="resolution" value="2.00 A"/>
    <property type="chains" value="A/B=44-485"/>
</dbReference>
<dbReference type="PDB" id="1YK0">
    <property type="method" value="X-ray"/>
    <property type="resolution" value="2.40 A"/>
    <property type="chains" value="A/B=1-480"/>
</dbReference>
<dbReference type="PDB" id="1YK1">
    <property type="method" value="X-ray"/>
    <property type="resolution" value="2.90 A"/>
    <property type="chains" value="A/B=2-480"/>
</dbReference>
<dbReference type="PDBsum" id="1JDN"/>
<dbReference type="PDBsum" id="1JDP"/>
<dbReference type="PDBsum" id="1YK0"/>
<dbReference type="PDBsum" id="1YK1"/>
<dbReference type="SMR" id="P17342"/>
<dbReference type="BioGRID" id="110943">
    <property type="interactions" value="11"/>
</dbReference>
<dbReference type="FunCoup" id="P17342">
    <property type="interactions" value="157"/>
</dbReference>
<dbReference type="IntAct" id="P17342">
    <property type="interactions" value="1"/>
</dbReference>
<dbReference type="STRING" id="9606.ENSP00000265074"/>
<dbReference type="BindingDB" id="P17342"/>
<dbReference type="ChEMBL" id="CHEMBL2247"/>
<dbReference type="DrugBank" id="DB04899">
    <property type="generic name" value="Nesiritide"/>
</dbReference>
<dbReference type="GuidetoPHARMACOLOGY" id="1749"/>
<dbReference type="GlyCosmos" id="P17342">
    <property type="glycosylation" value="3 sites, No reported glycans"/>
</dbReference>
<dbReference type="GlyGen" id="P17342">
    <property type="glycosylation" value="6 sites, 21 N-linked glycans (4 sites), 1 O-linked glycan (1 site)"/>
</dbReference>
<dbReference type="iPTMnet" id="P17342"/>
<dbReference type="PhosphoSitePlus" id="P17342"/>
<dbReference type="SwissPalm" id="P17342"/>
<dbReference type="BioMuta" id="NPR3"/>
<dbReference type="DMDM" id="27735161"/>
<dbReference type="MassIVE" id="P17342"/>
<dbReference type="PaxDb" id="9606-ENSP00000265074"/>
<dbReference type="PeptideAtlas" id="P17342"/>
<dbReference type="ProteomicsDB" id="17357"/>
<dbReference type="ProteomicsDB" id="53468">
    <molecule id="P17342-1"/>
</dbReference>
<dbReference type="ProteomicsDB" id="53469">
    <molecule id="P17342-2"/>
</dbReference>
<dbReference type="Pumba" id="P17342"/>
<dbReference type="Antibodypedia" id="5387">
    <property type="antibodies" value="486 antibodies from 34 providers"/>
</dbReference>
<dbReference type="DNASU" id="4883"/>
<dbReference type="Ensembl" id="ENST00000265074.13">
    <molecule id="P17342-1"/>
    <property type="protein sequence ID" value="ENSP00000265074.8"/>
    <property type="gene ID" value="ENSG00000113389.16"/>
</dbReference>
<dbReference type="Ensembl" id="ENST00000326958.5">
    <molecule id="P17342-3"/>
    <property type="protein sequence ID" value="ENSP00000318340.2"/>
    <property type="gene ID" value="ENSG00000113389.16"/>
</dbReference>
<dbReference type="Ensembl" id="ENST00000415167.2">
    <molecule id="P17342-2"/>
    <property type="protein sequence ID" value="ENSP00000398028.2"/>
    <property type="gene ID" value="ENSG00000113389.16"/>
</dbReference>
<dbReference type="GeneID" id="4883"/>
<dbReference type="KEGG" id="hsa:4883"/>
<dbReference type="MANE-Select" id="ENST00000265074.13">
    <property type="protein sequence ID" value="ENSP00000265074.8"/>
    <property type="RefSeq nucleotide sequence ID" value="NM_001204375.2"/>
    <property type="RefSeq protein sequence ID" value="NP_001191304.1"/>
</dbReference>
<dbReference type="UCSC" id="uc003jhv.4">
    <molecule id="P17342-1"/>
    <property type="organism name" value="human"/>
</dbReference>
<dbReference type="AGR" id="HGNC:7945"/>
<dbReference type="CTD" id="4883"/>
<dbReference type="DisGeNET" id="4883"/>
<dbReference type="GeneCards" id="NPR3"/>
<dbReference type="HGNC" id="HGNC:7945">
    <property type="gene designation" value="NPR3"/>
</dbReference>
<dbReference type="HPA" id="ENSG00000113389">
    <property type="expression patterns" value="Tissue enhanced (kidney)"/>
</dbReference>
<dbReference type="MalaCards" id="NPR3"/>
<dbReference type="MIM" id="108962">
    <property type="type" value="gene"/>
</dbReference>
<dbReference type="MIM" id="619543">
    <property type="type" value="phenotype"/>
</dbReference>
<dbReference type="neXtProt" id="NX_P17342"/>
<dbReference type="OpenTargets" id="ENSG00000113389"/>
<dbReference type="PharmGKB" id="PA31737"/>
<dbReference type="VEuPathDB" id="HostDB:ENSG00000113389"/>
<dbReference type="eggNOG" id="KOG1023">
    <property type="taxonomic scope" value="Eukaryota"/>
</dbReference>
<dbReference type="GeneTree" id="ENSGT00440000033872"/>
<dbReference type="HOGENOM" id="CLU_013995_1_0_1"/>
<dbReference type="InParanoid" id="P17342"/>
<dbReference type="OMA" id="ETRVMEH"/>
<dbReference type="OrthoDB" id="10065302at2759"/>
<dbReference type="PAN-GO" id="P17342">
    <property type="GO annotations" value="3 GO annotations based on evolutionary models"/>
</dbReference>
<dbReference type="PhylomeDB" id="P17342"/>
<dbReference type="TreeFam" id="TF106339"/>
<dbReference type="PathwayCommons" id="P17342"/>
<dbReference type="SignaLink" id="P17342"/>
<dbReference type="BioGRID-ORCS" id="4883">
    <property type="hits" value="4 hits in 1148 CRISPR screens"/>
</dbReference>
<dbReference type="EvolutionaryTrace" id="P17342"/>
<dbReference type="GeneWiki" id="NPR3"/>
<dbReference type="GenomeRNAi" id="4883"/>
<dbReference type="Pharos" id="P17342">
    <property type="development level" value="Tchem"/>
</dbReference>
<dbReference type="PRO" id="PR:P17342"/>
<dbReference type="Proteomes" id="UP000005640">
    <property type="component" value="Chromosome 5"/>
</dbReference>
<dbReference type="RNAct" id="P17342">
    <property type="molecule type" value="protein"/>
</dbReference>
<dbReference type="Bgee" id="ENSG00000113389">
    <property type="expression patterns" value="Expressed in adrenal tissue and 173 other cell types or tissues"/>
</dbReference>
<dbReference type="ExpressionAtlas" id="P17342">
    <property type="expression patterns" value="baseline and differential"/>
</dbReference>
<dbReference type="GO" id="GO:0070062">
    <property type="term" value="C:extracellular exosome"/>
    <property type="evidence" value="ECO:0007005"/>
    <property type="project" value="UniProtKB"/>
</dbReference>
<dbReference type="GO" id="GO:0005886">
    <property type="term" value="C:plasma membrane"/>
    <property type="evidence" value="ECO:0000305"/>
    <property type="project" value="BHF-UCL"/>
</dbReference>
<dbReference type="GO" id="GO:0032991">
    <property type="term" value="C:protein-containing complex"/>
    <property type="evidence" value="ECO:0000314"/>
    <property type="project" value="CAFA"/>
</dbReference>
<dbReference type="GO" id="GO:0031404">
    <property type="term" value="F:chloride ion binding"/>
    <property type="evidence" value="ECO:0000314"/>
    <property type="project" value="CAFA"/>
</dbReference>
<dbReference type="GO" id="GO:0008528">
    <property type="term" value="F:G protein-coupled peptide receptor activity"/>
    <property type="evidence" value="ECO:0000250"/>
    <property type="project" value="BHF-UCL"/>
</dbReference>
<dbReference type="GO" id="GO:0042562">
    <property type="term" value="F:hormone binding"/>
    <property type="evidence" value="ECO:0000353"/>
    <property type="project" value="CAFA"/>
</dbReference>
<dbReference type="GO" id="GO:0016941">
    <property type="term" value="F:natriuretic peptide receptor activity"/>
    <property type="evidence" value="ECO:0000314"/>
    <property type="project" value="UniProtKB"/>
</dbReference>
<dbReference type="GO" id="GO:0042277">
    <property type="term" value="F:peptide binding"/>
    <property type="evidence" value="ECO:0000353"/>
    <property type="project" value="CAFA"/>
</dbReference>
<dbReference type="GO" id="GO:0017046">
    <property type="term" value="F:peptide hormone binding"/>
    <property type="evidence" value="ECO:0000353"/>
    <property type="project" value="UniProtKB"/>
</dbReference>
<dbReference type="GO" id="GO:0042803">
    <property type="term" value="F:protein homodimerization activity"/>
    <property type="evidence" value="ECO:0000314"/>
    <property type="project" value="CAFA"/>
</dbReference>
<dbReference type="GO" id="GO:0001525">
    <property type="term" value="P:angiogenesis"/>
    <property type="evidence" value="ECO:0007669"/>
    <property type="project" value="Ensembl"/>
</dbReference>
<dbReference type="GO" id="GO:0001974">
    <property type="term" value="P:blood vessel remodeling"/>
    <property type="evidence" value="ECO:0007669"/>
    <property type="project" value="Ensembl"/>
</dbReference>
<dbReference type="GO" id="GO:0120163">
    <property type="term" value="P:negative regulation of cold-induced thermogenesis"/>
    <property type="evidence" value="ECO:0000250"/>
    <property type="project" value="YuBioLab"/>
</dbReference>
<dbReference type="GO" id="GO:0002158">
    <property type="term" value="P:osteoclast proliferation"/>
    <property type="evidence" value="ECO:0000250"/>
    <property type="project" value="UniProtKB"/>
</dbReference>
<dbReference type="GO" id="GO:0051000">
    <property type="term" value="P:positive regulation of nitric-oxide synthase activity"/>
    <property type="evidence" value="ECO:0000250"/>
    <property type="project" value="BHF-UCL"/>
</dbReference>
<dbReference type="GO" id="GO:0035810">
    <property type="term" value="P:positive regulation of urine volume"/>
    <property type="evidence" value="ECO:0000250"/>
    <property type="project" value="UniProtKB"/>
</dbReference>
<dbReference type="GO" id="GO:0008217">
    <property type="term" value="P:regulation of blood pressure"/>
    <property type="evidence" value="ECO:0000250"/>
    <property type="project" value="UniProtKB"/>
</dbReference>
<dbReference type="GO" id="GO:0033688">
    <property type="term" value="P:regulation of osteoblast proliferation"/>
    <property type="evidence" value="ECO:0000250"/>
    <property type="project" value="UniProtKB"/>
</dbReference>
<dbReference type="GO" id="GO:0002931">
    <property type="term" value="P:response to ischemia"/>
    <property type="evidence" value="ECO:0007669"/>
    <property type="project" value="Ensembl"/>
</dbReference>
<dbReference type="GO" id="GO:0007165">
    <property type="term" value="P:signal transduction"/>
    <property type="evidence" value="ECO:0000318"/>
    <property type="project" value="GO_Central"/>
</dbReference>
<dbReference type="GO" id="GO:0001501">
    <property type="term" value="P:skeletal system development"/>
    <property type="evidence" value="ECO:0000250"/>
    <property type="project" value="UniProtKB"/>
</dbReference>
<dbReference type="CDD" id="cd06386">
    <property type="entry name" value="PBP1_NPR_C"/>
    <property type="match status" value="1"/>
</dbReference>
<dbReference type="CDD" id="cd12841">
    <property type="entry name" value="TM_EphA1"/>
    <property type="match status" value="1"/>
</dbReference>
<dbReference type="FunFam" id="3.40.50.2300:FF:000147">
    <property type="entry name" value="Atrial natriuretic peptide receptor 3"/>
    <property type="match status" value="1"/>
</dbReference>
<dbReference type="FunFam" id="3.40.50.2300:FF:000246">
    <property type="entry name" value="Atrial natriuretic peptide receptor 3"/>
    <property type="match status" value="1"/>
</dbReference>
<dbReference type="Gene3D" id="3.40.50.2300">
    <property type="match status" value="2"/>
</dbReference>
<dbReference type="InterPro" id="IPR001828">
    <property type="entry name" value="ANF_lig-bd_rcpt"/>
</dbReference>
<dbReference type="InterPro" id="IPR052612">
    <property type="entry name" value="ANP_Clearance_Receptor"/>
</dbReference>
<dbReference type="InterPro" id="IPR001170">
    <property type="entry name" value="ANPR/GUC"/>
</dbReference>
<dbReference type="InterPro" id="IPR028082">
    <property type="entry name" value="Peripla_BP_I"/>
</dbReference>
<dbReference type="PANTHER" id="PTHR44755:SF1">
    <property type="entry name" value="ATRIAL NATRIURETIC PEPTIDE RECEPTOR 3"/>
    <property type="match status" value="1"/>
</dbReference>
<dbReference type="PANTHER" id="PTHR44755">
    <property type="entry name" value="NATRIURETIC PEPTIDE RECEPTOR 3-RELATED"/>
    <property type="match status" value="1"/>
</dbReference>
<dbReference type="Pfam" id="PF01094">
    <property type="entry name" value="ANF_receptor"/>
    <property type="match status" value="1"/>
</dbReference>
<dbReference type="PRINTS" id="PR00255">
    <property type="entry name" value="NATPEPTIDER"/>
</dbReference>
<dbReference type="SUPFAM" id="SSF53822">
    <property type="entry name" value="Periplasmic binding protein-like I"/>
    <property type="match status" value="1"/>
</dbReference>
<dbReference type="PROSITE" id="PS00458">
    <property type="entry name" value="ANF_RECEPTORS"/>
    <property type="match status" value="1"/>
</dbReference>
<gene>
    <name type="primary">NPR3</name>
    <name type="synonym">ANPRC</name>
    <name type="synonym">C5orf23</name>
    <name type="synonym">NPRC</name>
</gene>
<sequence>MPSLLVLTFSPCVLLGWALLAGGTGGGGVGGGGGGAGIGGGRQEREALPPQKIEVLVLLPQDDSYLFSLTRVRPAIEYALRSVEGNGTGRRLLPPGTRFQVAYEDSDCGNRALFSLVDRVAAARGAKPDLILGPVCEYAAAPVARLASHWDLPMLSAGALAAGFQHKDSEYSHLTRVAPAYAKMGEMMLALFRHHHWSRAALVYSDDKLERNCYFTLEGVHEVFQEEGLHTSIYSFDETKDLDLEDIVRNIQASERVVIMCASSDTIRSIMLVAHRHGMTSGDYAFFNIELFNSSSYGDGSWKRGDKHDFEAKQAYSSLQTVTLLRTVKPEFEKFSMEVKSSVEKQGLNMEDYVNMFVEGFHDAILLYVLALHEVLRAGYSKKDGGKIIQQTWNRTFEGIAGQVSIDANGDRYGDFSVIAMTDVEAGTQEVIGDYFGKEGRFEMRPNVKYPWGPLKLRIDENRIVEHTNSSPCKSSGGLEESAVTGIVVGALLGAGLLMAFYFFRKKYRITIERRTQQEESNLGKHRELREDSIRSHFSVA</sequence>
<reference key="1">
    <citation type="journal article" date="1990" name="Nucleic Acids Res.">
        <title>cDNA sequence of the human atrial natriuretic peptide clearance receptor.</title>
        <authorList>
            <person name="Lowe D.G."/>
            <person name="Camerato T.R."/>
            <person name="Goeddel D.V."/>
        </authorList>
    </citation>
    <scope>NUCLEOTIDE SEQUENCE [MRNA] (ISOFORM 2)</scope>
    <source>
        <tissue>Kidney</tissue>
    </source>
</reference>
<reference key="2">
    <citation type="journal article" date="1990" name="Biochem. Biophys. Res. Commun.">
        <title>Isolation and functional expression of the human atrial natriuretic peptide clearance receptor cDNA.</title>
        <authorList>
            <person name="Porter J.G."/>
            <person name="Arfsten A."/>
            <person name="Fuller F."/>
            <person name="Miller J.A."/>
            <person name="Gregory L.C."/>
            <person name="Lewicki J.A."/>
        </authorList>
    </citation>
    <scope>NUCLEOTIDE SEQUENCE [MRNA] (ISOFORM 1)</scope>
</reference>
<reference key="3">
    <citation type="submission" date="1997-11" db="EMBL/GenBank/DDBJ databases">
        <title>Human lens epithelial mRNA for atrial natriuretic peptide clearance receptor.</title>
        <authorList>
            <person name="Rae J.L."/>
            <person name="Shepard A.R."/>
        </authorList>
    </citation>
    <scope>NUCLEOTIDE SEQUENCE [MRNA] (ISOFORM 2)</scope>
    <source>
        <tissue>Lens epithelium</tissue>
    </source>
</reference>
<reference key="4">
    <citation type="journal article" date="2004" name="Nat. Genet.">
        <title>Complete sequencing and characterization of 21,243 full-length human cDNAs.</title>
        <authorList>
            <person name="Ota T."/>
            <person name="Suzuki Y."/>
            <person name="Nishikawa T."/>
            <person name="Otsuki T."/>
            <person name="Sugiyama T."/>
            <person name="Irie R."/>
            <person name="Wakamatsu A."/>
            <person name="Hayashi K."/>
            <person name="Sato H."/>
            <person name="Nagai K."/>
            <person name="Kimura K."/>
            <person name="Makita H."/>
            <person name="Sekine M."/>
            <person name="Obayashi M."/>
            <person name="Nishi T."/>
            <person name="Shibahara T."/>
            <person name="Tanaka T."/>
            <person name="Ishii S."/>
            <person name="Yamamoto J."/>
            <person name="Saito K."/>
            <person name="Kawai Y."/>
            <person name="Isono Y."/>
            <person name="Nakamura Y."/>
            <person name="Nagahari K."/>
            <person name="Murakami K."/>
            <person name="Yasuda T."/>
            <person name="Iwayanagi T."/>
            <person name="Wagatsuma M."/>
            <person name="Shiratori A."/>
            <person name="Sudo H."/>
            <person name="Hosoiri T."/>
            <person name="Kaku Y."/>
            <person name="Kodaira H."/>
            <person name="Kondo H."/>
            <person name="Sugawara M."/>
            <person name="Takahashi M."/>
            <person name="Kanda K."/>
            <person name="Yokoi T."/>
            <person name="Furuya T."/>
            <person name="Kikkawa E."/>
            <person name="Omura Y."/>
            <person name="Abe K."/>
            <person name="Kamihara K."/>
            <person name="Katsuta N."/>
            <person name="Sato K."/>
            <person name="Tanikawa M."/>
            <person name="Yamazaki M."/>
            <person name="Ninomiya K."/>
            <person name="Ishibashi T."/>
            <person name="Yamashita H."/>
            <person name="Murakawa K."/>
            <person name="Fujimori K."/>
            <person name="Tanai H."/>
            <person name="Kimata M."/>
            <person name="Watanabe M."/>
            <person name="Hiraoka S."/>
            <person name="Chiba Y."/>
            <person name="Ishida S."/>
            <person name="Ono Y."/>
            <person name="Takiguchi S."/>
            <person name="Watanabe S."/>
            <person name="Yosida M."/>
            <person name="Hotuta T."/>
            <person name="Kusano J."/>
            <person name="Kanehori K."/>
            <person name="Takahashi-Fujii A."/>
            <person name="Hara H."/>
            <person name="Tanase T.-O."/>
            <person name="Nomura Y."/>
            <person name="Togiya S."/>
            <person name="Komai F."/>
            <person name="Hara R."/>
            <person name="Takeuchi K."/>
            <person name="Arita M."/>
            <person name="Imose N."/>
            <person name="Musashino K."/>
            <person name="Yuuki H."/>
            <person name="Oshima A."/>
            <person name="Sasaki N."/>
            <person name="Aotsuka S."/>
            <person name="Yoshikawa Y."/>
            <person name="Matsunawa H."/>
            <person name="Ichihara T."/>
            <person name="Shiohata N."/>
            <person name="Sano S."/>
            <person name="Moriya S."/>
            <person name="Momiyama H."/>
            <person name="Satoh N."/>
            <person name="Takami S."/>
            <person name="Terashima Y."/>
            <person name="Suzuki O."/>
            <person name="Nakagawa S."/>
            <person name="Senoh A."/>
            <person name="Mizoguchi H."/>
            <person name="Goto Y."/>
            <person name="Shimizu F."/>
            <person name="Wakebe H."/>
            <person name="Hishigaki H."/>
            <person name="Watanabe T."/>
            <person name="Sugiyama A."/>
            <person name="Takemoto M."/>
            <person name="Kawakami B."/>
            <person name="Yamazaki M."/>
            <person name="Watanabe K."/>
            <person name="Kumagai A."/>
            <person name="Itakura S."/>
            <person name="Fukuzumi Y."/>
            <person name="Fujimori Y."/>
            <person name="Komiyama M."/>
            <person name="Tashiro H."/>
            <person name="Tanigami A."/>
            <person name="Fujiwara T."/>
            <person name="Ono T."/>
            <person name="Yamada K."/>
            <person name="Fujii Y."/>
            <person name="Ozaki K."/>
            <person name="Hirao M."/>
            <person name="Ohmori Y."/>
            <person name="Kawabata A."/>
            <person name="Hikiji T."/>
            <person name="Kobatake N."/>
            <person name="Inagaki H."/>
            <person name="Ikema Y."/>
            <person name="Okamoto S."/>
            <person name="Okitani R."/>
            <person name="Kawakami T."/>
            <person name="Noguchi S."/>
            <person name="Itoh T."/>
            <person name="Shigeta K."/>
            <person name="Senba T."/>
            <person name="Matsumura K."/>
            <person name="Nakajima Y."/>
            <person name="Mizuno T."/>
            <person name="Morinaga M."/>
            <person name="Sasaki M."/>
            <person name="Togashi T."/>
            <person name="Oyama M."/>
            <person name="Hata H."/>
            <person name="Watanabe M."/>
            <person name="Komatsu T."/>
            <person name="Mizushima-Sugano J."/>
            <person name="Satoh T."/>
            <person name="Shirai Y."/>
            <person name="Takahashi Y."/>
            <person name="Nakagawa K."/>
            <person name="Okumura K."/>
            <person name="Nagase T."/>
            <person name="Nomura N."/>
            <person name="Kikuchi H."/>
            <person name="Masuho Y."/>
            <person name="Yamashita R."/>
            <person name="Nakai K."/>
            <person name="Yada T."/>
            <person name="Nakamura Y."/>
            <person name="Ohara O."/>
            <person name="Isogai T."/>
            <person name="Sugano S."/>
        </authorList>
    </citation>
    <scope>NUCLEOTIDE SEQUENCE [LARGE SCALE MRNA] (ISOFORM 3)</scope>
    <source>
        <tissue>Pericardium</tissue>
    </source>
</reference>
<reference key="5">
    <citation type="journal article" date="2004" name="Nature">
        <title>The DNA sequence and comparative analysis of human chromosome 5.</title>
        <authorList>
            <person name="Schmutz J."/>
            <person name="Martin J."/>
            <person name="Terry A."/>
            <person name="Couronne O."/>
            <person name="Grimwood J."/>
            <person name="Lowry S."/>
            <person name="Gordon L.A."/>
            <person name="Scott D."/>
            <person name="Xie G."/>
            <person name="Huang W."/>
            <person name="Hellsten U."/>
            <person name="Tran-Gyamfi M."/>
            <person name="She X."/>
            <person name="Prabhakar S."/>
            <person name="Aerts A."/>
            <person name="Altherr M."/>
            <person name="Bajorek E."/>
            <person name="Black S."/>
            <person name="Branscomb E."/>
            <person name="Caoile C."/>
            <person name="Challacombe J.F."/>
            <person name="Chan Y.M."/>
            <person name="Denys M."/>
            <person name="Detter J.C."/>
            <person name="Escobar J."/>
            <person name="Flowers D."/>
            <person name="Fotopulos D."/>
            <person name="Glavina T."/>
            <person name="Gomez M."/>
            <person name="Gonzales E."/>
            <person name="Goodstein D."/>
            <person name="Grigoriev I."/>
            <person name="Groza M."/>
            <person name="Hammon N."/>
            <person name="Hawkins T."/>
            <person name="Haydu L."/>
            <person name="Israni S."/>
            <person name="Jett J."/>
            <person name="Kadner K."/>
            <person name="Kimball H."/>
            <person name="Kobayashi A."/>
            <person name="Lopez F."/>
            <person name="Lou Y."/>
            <person name="Martinez D."/>
            <person name="Medina C."/>
            <person name="Morgan J."/>
            <person name="Nandkeshwar R."/>
            <person name="Noonan J.P."/>
            <person name="Pitluck S."/>
            <person name="Pollard M."/>
            <person name="Predki P."/>
            <person name="Priest J."/>
            <person name="Ramirez L."/>
            <person name="Retterer J."/>
            <person name="Rodriguez A."/>
            <person name="Rogers S."/>
            <person name="Salamov A."/>
            <person name="Salazar A."/>
            <person name="Thayer N."/>
            <person name="Tice H."/>
            <person name="Tsai M."/>
            <person name="Ustaszewska A."/>
            <person name="Vo N."/>
            <person name="Wheeler J."/>
            <person name="Wu K."/>
            <person name="Yang J."/>
            <person name="Dickson M."/>
            <person name="Cheng J.-F."/>
            <person name="Eichler E.E."/>
            <person name="Olsen A."/>
            <person name="Pennacchio L.A."/>
            <person name="Rokhsar D.S."/>
            <person name="Richardson P."/>
            <person name="Lucas S.M."/>
            <person name="Myers R.M."/>
            <person name="Rubin E.M."/>
        </authorList>
    </citation>
    <scope>NUCLEOTIDE SEQUENCE [LARGE SCALE GENOMIC DNA]</scope>
</reference>
<reference key="6">
    <citation type="submission" date="2005-07" db="EMBL/GenBank/DDBJ databases">
        <authorList>
            <person name="Mural R.J."/>
            <person name="Istrail S."/>
            <person name="Sutton G.G."/>
            <person name="Florea L."/>
            <person name="Halpern A.L."/>
            <person name="Mobarry C.M."/>
            <person name="Lippert R."/>
            <person name="Walenz B."/>
            <person name="Shatkay H."/>
            <person name="Dew I."/>
            <person name="Miller J.R."/>
            <person name="Flanigan M.J."/>
            <person name="Edwards N.J."/>
            <person name="Bolanos R."/>
            <person name="Fasulo D."/>
            <person name="Halldorsson B.V."/>
            <person name="Hannenhalli S."/>
            <person name="Turner R."/>
            <person name="Yooseph S."/>
            <person name="Lu F."/>
            <person name="Nusskern D.R."/>
            <person name="Shue B.C."/>
            <person name="Zheng X.H."/>
            <person name="Zhong F."/>
            <person name="Delcher A.L."/>
            <person name="Huson D.H."/>
            <person name="Kravitz S.A."/>
            <person name="Mouchard L."/>
            <person name="Reinert K."/>
            <person name="Remington K.A."/>
            <person name="Clark A.G."/>
            <person name="Waterman M.S."/>
            <person name="Eichler E.E."/>
            <person name="Adams M.D."/>
            <person name="Hunkapiller M.W."/>
            <person name="Myers E.W."/>
            <person name="Venter J.C."/>
        </authorList>
    </citation>
    <scope>NUCLEOTIDE SEQUENCE [LARGE SCALE GENOMIC DNA]</scope>
</reference>
<reference key="7">
    <citation type="journal article" date="2004" name="Genome Res.">
        <title>The status, quality, and expansion of the NIH full-length cDNA project: the Mammalian Gene Collection (MGC).</title>
        <authorList>
            <consortium name="The MGC Project Team"/>
        </authorList>
    </citation>
    <scope>NUCLEOTIDE SEQUENCE [LARGE SCALE MRNA] (ISOFORM 1)</scope>
</reference>
<reference key="8">
    <citation type="journal article" date="1994" name="Biochemistry">
        <title>The disulfide linkages and glycosylation sites of the human natriuretic peptide receptor-C homodimer.</title>
        <authorList>
            <person name="Stults J.T."/>
            <person name="O'Connell K.L."/>
            <person name="Garcia C."/>
            <person name="Wong S."/>
            <person name="Engel A.M."/>
            <person name="Garbers D.L."/>
            <person name="Lowe D.G."/>
        </authorList>
    </citation>
    <scope>PARTIAL PROTEIN SEQUENCE (ISOFORMS 1 AND 2)</scope>
    <scope>DISULFIDE BONDS</scope>
    <scope>GLYCOSYLATION AT ASN-86; ASN-293 AND ASN-394</scope>
    <scope>STRUCTURE OF CARBOHYDRATES</scope>
</reference>
<reference key="9">
    <citation type="journal article" date="1991" name="J. Biol. Chem.">
        <title>Extracellular domain-IgG fusion proteins for three human natriuretic peptide receptors. Hormone pharmacology and application to solid phase screening of synthetic peptide antisera.</title>
        <authorList>
            <person name="Bennett B.D."/>
            <person name="Bennett G.L."/>
            <person name="Vitangcol R.V."/>
            <person name="Jewett J.R."/>
            <person name="Burnier J."/>
            <person name="Henzel W."/>
            <person name="Lowe D.G."/>
        </authorList>
    </citation>
    <scope>LIGAND-BINDING</scope>
</reference>
<reference key="10">
    <citation type="journal article" date="2001" name="Science">
        <title>Allosteric activation of a spring-loaded natriuretic peptide receptor dimer by hormone.</title>
        <authorList>
            <person name="He X.-L."/>
            <person name="Chow D.-C."/>
            <person name="Martick M.M."/>
            <person name="Garcia K.C."/>
        </authorList>
    </citation>
    <scope>X-RAY CRYSTALLOGRAPHY (2.0 ANGSTROMS) OF 44-485 IN COMPLEX WITH NATRIURETIC PEPTIDE</scope>
    <scope>GLYCOSYLATION AT ASN-293 AND ASN-394</scope>
    <scope>DISULFIDE BONDS</scope>
    <scope>SUBUNIT</scope>
</reference>
<reference key="11">
    <citation type="journal article" date="2006" name="J. Mol. Biol.">
        <title>Structural determinants of natriuretic peptide receptor specificity and degeneracy.</title>
        <authorList>
            <person name="He X.-L."/>
            <person name="Dukkipati A."/>
            <person name="Garcia K.C."/>
        </authorList>
    </citation>
    <scope>X-RAY CRYSTALLOGRAPHY (2.4 ANGSTROMS) OF 1-480 IN COMPLEX WITH NATRIURETIC PEPTIDE AND CHLORIDE IONS</scope>
    <scope>GLYCOSYLATION AT ASN-86; ASN-293 AND ASN-394</scope>
    <scope>DISULFIDE BONDS</scope>
</reference>
<reference key="12">
    <citation type="journal article" date="2018" name="Am. J. Hum. Genet.">
        <title>Bi-allelic Loss-of-Function Mutations in the NPR-C Receptor Result in Enhanced Growth and Connective Tissue Abnormalities.</title>
        <authorList>
            <person name="Boudin E."/>
            <person name="de Jong T.R."/>
            <person name="Prickett T.C.R."/>
            <person name="Lapauw B."/>
            <person name="Toye K."/>
            <person name="Van Hoof V."/>
            <person name="Luyckx I."/>
            <person name="Verstraeten A."/>
            <person name="Heymans H.S.A."/>
            <person name="Dulfer E."/>
            <person name="Van Laer L."/>
            <person name="Berry I.R."/>
            <person name="Dobbie A."/>
            <person name="Blair E."/>
            <person name="Loeys B."/>
            <person name="Espiner E.A."/>
            <person name="Wit J.M."/>
            <person name="Van Hul W."/>
            <person name="Houpt P."/>
            <person name="Mortier G.R."/>
        </authorList>
    </citation>
    <scope>INVOLVEMENT IN BOMOS</scope>
    <scope>VARIANTS BOMOS PRO-148 AND VAL-363</scope>
    <scope>SUBCELLULAR LOCATION</scope>
</reference>
<feature type="signal peptide" evidence="2">
    <location>
        <begin position="1"/>
        <end position="26"/>
    </location>
</feature>
<feature type="chain" id="PRO_0000012370" description="Atrial natriuretic peptide receptor 3">
    <location>
        <begin position="27"/>
        <end position="541"/>
    </location>
</feature>
<feature type="topological domain" description="Extracellular" evidence="2">
    <location>
        <begin position="27"/>
        <end position="481"/>
    </location>
</feature>
<feature type="transmembrane region" description="Helical" evidence="2">
    <location>
        <begin position="482"/>
        <end position="504"/>
    </location>
</feature>
<feature type="topological domain" description="Cytoplasmic" evidence="2">
    <location>
        <begin position="505"/>
        <end position="541"/>
    </location>
</feature>
<feature type="binding site">
    <location>
        <position position="106"/>
    </location>
    <ligand>
        <name>chloride</name>
        <dbReference type="ChEBI" id="CHEBI:17996"/>
    </ligand>
</feature>
<feature type="binding site">
    <location>
        <position position="135"/>
    </location>
    <ligand>
        <name>chloride</name>
        <dbReference type="ChEBI" id="CHEBI:17996"/>
    </ligand>
</feature>
<feature type="binding site">
    <location>
        <position position="136"/>
    </location>
    <ligand>
        <name>chloride</name>
        <dbReference type="ChEBI" id="CHEBI:17996"/>
    </ligand>
</feature>
<feature type="glycosylation site" description="N-linked (GlcNAc...) (complex) asparagine" evidence="4 6">
    <location>
        <position position="86"/>
    </location>
</feature>
<feature type="glycosylation site" description="N-linked (GlcNAc...) (high mannose) asparagine" evidence="3 4 6">
    <location>
        <position position="293"/>
    </location>
</feature>
<feature type="glycosylation site" description="N-linked (GlcNAc...) (complex) asparagine" evidence="3 4 6">
    <location>
        <position position="394"/>
    </location>
</feature>
<feature type="disulfide bond" evidence="3 4 6">
    <location>
        <begin position="108"/>
        <end position="136"/>
    </location>
</feature>
<feature type="disulfide bond" evidence="3 4 6">
    <location>
        <begin position="213"/>
        <end position="261"/>
    </location>
</feature>
<feature type="disulfide bond" description="Interchain" evidence="3 4 6">
    <location>
        <position position="473"/>
    </location>
</feature>
<feature type="splice variant" id="VSP_045901" description="In isoform 3." evidence="7">
    <original>MPSLLVLTFSPCVLLGWALLAGGTGGGGVGGGGGGAGIGG</original>
    <variation>MEPSALGPWSLFPDLAPRDQEGQVLAPRRCFRRECGQNEK</variation>
    <location>
        <begin position="1"/>
        <end position="40"/>
    </location>
</feature>
<feature type="splice variant" id="VSP_045902" description="In isoform 3." evidence="7">
    <location>
        <begin position="41"/>
        <end position="256"/>
    </location>
</feature>
<feature type="splice variant" id="VSP_001812" description="In isoform 2 and isoform 3." evidence="7 8 9">
    <original>SG</original>
    <variation>C</variation>
    <location>
        <begin position="476"/>
        <end position="477"/>
    </location>
</feature>
<feature type="sequence variant" id="VAR_086244" description="In BOMOS; loss of localization at the plasma membrane; dbSNP:rs1433125500." evidence="5">
    <original>S</original>
    <variation>P</variation>
    <location>
        <position position="148"/>
    </location>
</feature>
<feature type="sequence variant" id="VAR_086245" description="In BOMOS; loss of localization at the plasma membrane; dbSNP:rs1741953064." evidence="5">
    <original>D</original>
    <variation>V</variation>
    <location>
        <position position="363"/>
    </location>
</feature>
<feature type="sequence conflict" description="In Ref. 4; BAG61896." evidence="10" ref="4">
    <original>N</original>
    <variation>D</variation>
    <location>
        <position position="522"/>
    </location>
</feature>
<feature type="strand" evidence="12">
    <location>
        <begin position="52"/>
        <end position="59"/>
    </location>
</feature>
<feature type="helix" evidence="12">
    <location>
        <begin position="69"/>
        <end position="83"/>
    </location>
</feature>
<feature type="strand" evidence="12">
    <location>
        <begin position="98"/>
        <end position="105"/>
    </location>
</feature>
<feature type="helix" evidence="12">
    <location>
        <begin position="111"/>
        <end position="122"/>
    </location>
</feature>
<feature type="turn" evidence="12">
    <location>
        <begin position="123"/>
        <end position="125"/>
    </location>
</feature>
<feature type="strand" evidence="12">
    <location>
        <begin position="129"/>
        <end position="132"/>
    </location>
</feature>
<feature type="helix" evidence="12">
    <location>
        <begin position="137"/>
        <end position="150"/>
    </location>
</feature>
<feature type="strand" evidence="12">
    <location>
        <begin position="154"/>
        <end position="157"/>
    </location>
</feature>
<feature type="helix" evidence="12">
    <location>
        <begin position="162"/>
        <end position="165"/>
    </location>
</feature>
<feature type="turn" evidence="12">
    <location>
        <begin position="167"/>
        <end position="173"/>
    </location>
</feature>
<feature type="strand" evidence="12">
    <location>
        <begin position="174"/>
        <end position="176"/>
    </location>
</feature>
<feature type="helix" evidence="12">
    <location>
        <begin position="181"/>
        <end position="195"/>
    </location>
</feature>
<feature type="strand" evidence="12">
    <location>
        <begin position="199"/>
        <end position="205"/>
    </location>
</feature>
<feature type="strand" evidence="12">
    <location>
        <begin position="208"/>
        <end position="210"/>
    </location>
</feature>
<feature type="helix" evidence="12">
    <location>
        <begin position="212"/>
        <end position="227"/>
    </location>
</feature>
<feature type="strand" evidence="12">
    <location>
        <begin position="230"/>
        <end position="236"/>
    </location>
</feature>
<feature type="strand" evidence="13">
    <location>
        <begin position="238"/>
        <end position="240"/>
    </location>
</feature>
<feature type="helix" evidence="12">
    <location>
        <begin position="244"/>
        <end position="254"/>
    </location>
</feature>
<feature type="strand" evidence="12">
    <location>
        <begin position="256"/>
        <end position="262"/>
    </location>
</feature>
<feature type="helix" evidence="12">
    <location>
        <begin position="264"/>
        <end position="276"/>
    </location>
</feature>
<feature type="turn" evidence="12">
    <location>
        <begin position="280"/>
        <end position="283"/>
    </location>
</feature>
<feature type="strand" evidence="12">
    <location>
        <begin position="285"/>
        <end position="289"/>
    </location>
</feature>
<feature type="helix" evidence="11">
    <location>
        <begin position="291"/>
        <end position="293"/>
    </location>
</feature>
<feature type="turn" evidence="12">
    <location>
        <begin position="297"/>
        <end position="299"/>
    </location>
</feature>
<feature type="helix" evidence="12">
    <location>
        <begin position="309"/>
        <end position="315"/>
    </location>
</feature>
<feature type="helix" evidence="12">
    <location>
        <begin position="316"/>
        <end position="318"/>
    </location>
</feature>
<feature type="strand" evidence="12">
    <location>
        <begin position="319"/>
        <end position="324"/>
    </location>
</feature>
<feature type="helix" evidence="12">
    <location>
        <begin position="330"/>
        <end position="344"/>
    </location>
</feature>
<feature type="turn" evidence="12">
    <location>
        <begin position="345"/>
        <end position="347"/>
    </location>
</feature>
<feature type="helix" evidence="12">
    <location>
        <begin position="356"/>
        <end position="377"/>
    </location>
</feature>
<feature type="helix" evidence="12">
    <location>
        <begin position="385"/>
        <end position="392"/>
    </location>
</feature>
<feature type="strand" evidence="12">
    <location>
        <begin position="393"/>
        <end position="399"/>
    </location>
</feature>
<feature type="strand" evidence="12">
    <location>
        <begin position="402"/>
        <end position="406"/>
    </location>
</feature>
<feature type="strand" evidence="12">
    <location>
        <begin position="410"/>
        <end position="412"/>
    </location>
</feature>
<feature type="strand" evidence="12">
    <location>
        <begin position="415"/>
        <end position="423"/>
    </location>
</feature>
<feature type="turn" evidence="12">
    <location>
        <begin position="424"/>
        <end position="427"/>
    </location>
</feature>
<feature type="strand" evidence="12">
    <location>
        <begin position="428"/>
        <end position="436"/>
    </location>
</feature>
<feature type="turn" evidence="12">
    <location>
        <begin position="437"/>
        <end position="440"/>
    </location>
</feature>
<feature type="strand" evidence="12">
    <location>
        <begin position="441"/>
        <end position="444"/>
    </location>
</feature>
<feature type="strand" evidence="11">
    <location>
        <begin position="451"/>
        <end position="453"/>
    </location>
</feature>
<feature type="helix" evidence="11">
    <location>
        <begin position="454"/>
        <end position="456"/>
    </location>
</feature>
<accession>P17342</accession>
<accession>A2RRD1</accession>
<accession>B4DT84</accession>
<accession>E7EPG9</accession>
<comment type="function">
    <text evidence="1">Receptor for the natriuretic peptide hormones, binding with similar affinities atrial natriuretic peptide NPPA/ANP, brain natriuretic peptide NPPB/BNP, and C-type natriuretic peptide NPPC/CNP. May function as a clearance receptor for NPPA, NPPB and NPPC, regulating their local concentrations and effects. Acts as a regulator of osteoblast differentiation and bone growth by binding to its ligand osteocrin, thereby preventing binding between NPR3/NPR-C and natriuretic peptides, leading to increase cGMP production (By similarity).</text>
</comment>
<comment type="subunit">
    <text evidence="1 3">Homodimer; disulfide-linked (PubMed:11533490). Dimers can also be formed through the C-terminal cysteine of isoform 2 (PubMed:11533490). Interacts with OSTN (By similarity).</text>
</comment>
<comment type="subcellular location">
    <subcellularLocation>
        <location evidence="5">Cell membrane</location>
        <topology>Single-pass type I membrane protein</topology>
    </subcellularLocation>
</comment>
<comment type="alternative products">
    <event type="alternative splicing"/>
    <isoform>
        <id>P17342-1</id>
        <name>1</name>
        <name>NPR-C5</name>
        <sequence type="displayed"/>
    </isoform>
    <isoform>
        <id>P17342-2</id>
        <name>2</name>
        <name>NPR-C6</name>
        <sequence type="described" ref="VSP_001812"/>
    </isoform>
    <isoform>
        <id>P17342-3</id>
        <name>3</name>
        <sequence type="described" ref="VSP_045901 VSP_045902 VSP_001812"/>
    </isoform>
</comment>
<comment type="disease" evidence="5">
    <disease id="DI-06231">
        <name>Boudin-Mortier syndrome</name>
        <acronym>BOMOS</acronym>
        <description>An autosomal recessive disorder characterized by tall stature, long digits, and extra epiphyses in the hands and feet. In addition, some patients show joint hypermobility and dilation of the aortic root.</description>
        <dbReference type="MIM" id="619543"/>
    </disease>
    <text>The disease is caused by variants affecting the gene represented in this entry.</text>
</comment>
<comment type="miscellaneous">
    <text>Has low affinity for peptide hormones in the absence of bound chloride.</text>
</comment>
<comment type="similarity">
    <text evidence="10">Belongs to the ANF receptor family.</text>
</comment>
<protein>
    <recommendedName>
        <fullName>Atrial natriuretic peptide receptor 3</fullName>
    </recommendedName>
    <alternativeName>
        <fullName>Atrial natriuretic peptide clearance receptor</fullName>
    </alternativeName>
    <alternativeName>
        <fullName>Atrial natriuretic peptide receptor type C</fullName>
        <shortName>ANP-C</shortName>
        <shortName>ANPR-C</shortName>
        <shortName>NPR-C</shortName>
    </alternativeName>
</protein>
<proteinExistence type="evidence at protein level"/>
<name>ANPRC_HUMAN</name>
<evidence type="ECO:0000250" key="1">
    <source>
        <dbReference type="UniProtKB" id="P70180"/>
    </source>
</evidence>
<evidence type="ECO:0000255" key="2"/>
<evidence type="ECO:0000269" key="3">
    <source>
    </source>
</evidence>
<evidence type="ECO:0000269" key="4">
    <source>
    </source>
</evidence>
<evidence type="ECO:0000269" key="5">
    <source>
    </source>
</evidence>
<evidence type="ECO:0000269" key="6">
    <source>
    </source>
</evidence>
<evidence type="ECO:0000303" key="7">
    <source>
    </source>
</evidence>
<evidence type="ECO:0000303" key="8">
    <source>
    </source>
</evidence>
<evidence type="ECO:0000303" key="9">
    <source ref="3"/>
</evidence>
<evidence type="ECO:0000305" key="10"/>
<evidence type="ECO:0007829" key="11">
    <source>
        <dbReference type="PDB" id="1JDN"/>
    </source>
</evidence>
<evidence type="ECO:0007829" key="12">
    <source>
        <dbReference type="PDB" id="1JDP"/>
    </source>
</evidence>
<evidence type="ECO:0007829" key="13">
    <source>
        <dbReference type="PDB" id="1YK0"/>
    </source>
</evidence>
<organism>
    <name type="scientific">Homo sapiens</name>
    <name type="common">Human</name>
    <dbReference type="NCBI Taxonomy" id="9606"/>
    <lineage>
        <taxon>Eukaryota</taxon>
        <taxon>Metazoa</taxon>
        <taxon>Chordata</taxon>
        <taxon>Craniata</taxon>
        <taxon>Vertebrata</taxon>
        <taxon>Euteleostomi</taxon>
        <taxon>Mammalia</taxon>
        <taxon>Eutheria</taxon>
        <taxon>Euarchontoglires</taxon>
        <taxon>Primates</taxon>
        <taxon>Haplorrhini</taxon>
        <taxon>Catarrhini</taxon>
        <taxon>Hominidae</taxon>
        <taxon>Homo</taxon>
    </lineage>
</organism>